<dbReference type="EC" id="3.4.21.37"/>
<dbReference type="EMBL" id="U04962">
    <property type="protein sequence ID" value="AAB60670.1"/>
    <property type="molecule type" value="Genomic_DNA"/>
</dbReference>
<dbReference type="EMBL" id="U06076">
    <property type="protein sequence ID" value="AAB60670.1"/>
    <property type="status" value="JOINED"/>
    <property type="molecule type" value="Genomic_DNA"/>
</dbReference>
<dbReference type="EMBL" id="AK143710">
    <property type="protein sequence ID" value="BAE25510.1"/>
    <property type="molecule type" value="mRNA"/>
</dbReference>
<dbReference type="EMBL" id="BC145800">
    <property type="protein sequence ID" value="AAI45801.1"/>
    <property type="molecule type" value="mRNA"/>
</dbReference>
<dbReference type="CCDS" id="CCDS23994.1"/>
<dbReference type="PIR" id="I48679">
    <property type="entry name" value="I48679"/>
</dbReference>
<dbReference type="RefSeq" id="NP_056594.2">
    <property type="nucleotide sequence ID" value="NM_015779.2"/>
</dbReference>
<dbReference type="SMR" id="Q3UP87"/>
<dbReference type="BioGRID" id="206058">
    <property type="interactions" value="1"/>
</dbReference>
<dbReference type="FunCoup" id="Q3UP87">
    <property type="interactions" value="170"/>
</dbReference>
<dbReference type="STRING" id="10090.ENSMUSP00000038925"/>
<dbReference type="BindingDB" id="Q3UP87"/>
<dbReference type="ChEMBL" id="CHEMBL5156"/>
<dbReference type="DrugCentral" id="Q3UP87"/>
<dbReference type="MEROPS" id="S01.131"/>
<dbReference type="GlyCosmos" id="Q3UP87">
    <property type="glycosylation" value="2 sites, No reported glycans"/>
</dbReference>
<dbReference type="GlyGen" id="Q3UP87">
    <property type="glycosylation" value="2 sites"/>
</dbReference>
<dbReference type="PhosphoSitePlus" id="Q3UP87"/>
<dbReference type="jPOST" id="Q3UP87"/>
<dbReference type="PaxDb" id="10090-ENSMUSP00000038925"/>
<dbReference type="ProteomicsDB" id="277786"/>
<dbReference type="Antibodypedia" id="4209">
    <property type="antibodies" value="715 antibodies from 42 providers"/>
</dbReference>
<dbReference type="DNASU" id="50701"/>
<dbReference type="Ensembl" id="ENSMUST00000046091.7">
    <property type="protein sequence ID" value="ENSMUSP00000038925.5"/>
    <property type="gene ID" value="ENSMUSG00000020125.8"/>
</dbReference>
<dbReference type="GeneID" id="50701"/>
<dbReference type="KEGG" id="mmu:50701"/>
<dbReference type="UCSC" id="uc007gai.1">
    <property type="organism name" value="mouse"/>
</dbReference>
<dbReference type="AGR" id="MGI:2679229"/>
<dbReference type="CTD" id="1991"/>
<dbReference type="MGI" id="MGI:2679229">
    <property type="gene designation" value="Elane"/>
</dbReference>
<dbReference type="VEuPathDB" id="HostDB:ENSMUSG00000020125"/>
<dbReference type="eggNOG" id="KOG3627">
    <property type="taxonomic scope" value="Eukaryota"/>
</dbReference>
<dbReference type="GeneTree" id="ENSGT01030000234528"/>
<dbReference type="HOGENOM" id="CLU_006842_1_0_1"/>
<dbReference type="InParanoid" id="Q3UP87"/>
<dbReference type="OMA" id="RRRVNVC"/>
<dbReference type="OrthoDB" id="8440449at2759"/>
<dbReference type="PhylomeDB" id="Q3UP87"/>
<dbReference type="TreeFam" id="TF335284"/>
<dbReference type="Reactome" id="R-MMU-1474228">
    <property type="pathway name" value="Degradation of the extracellular matrix"/>
</dbReference>
<dbReference type="Reactome" id="R-MMU-1592389">
    <property type="pathway name" value="Activation of Matrix Metalloproteinases"/>
</dbReference>
<dbReference type="Reactome" id="R-MMU-5620971">
    <property type="pathway name" value="Pyroptosis"/>
</dbReference>
<dbReference type="Reactome" id="R-MMU-6798695">
    <property type="pathway name" value="Neutrophil degranulation"/>
</dbReference>
<dbReference type="Reactome" id="R-MMU-6803157">
    <property type="pathway name" value="Antimicrobial peptides"/>
</dbReference>
<dbReference type="Reactome" id="R-MMU-977606">
    <property type="pathway name" value="Regulation of Complement cascade"/>
</dbReference>
<dbReference type="BioGRID-ORCS" id="50701">
    <property type="hits" value="1 hit in 76 CRISPR screens"/>
</dbReference>
<dbReference type="ChiTaRS" id="Cela2a">
    <property type="organism name" value="mouse"/>
</dbReference>
<dbReference type="PRO" id="PR:Q3UP87"/>
<dbReference type="Proteomes" id="UP000000589">
    <property type="component" value="Chromosome 10"/>
</dbReference>
<dbReference type="RNAct" id="Q3UP87">
    <property type="molecule type" value="protein"/>
</dbReference>
<dbReference type="Bgee" id="ENSMUSG00000020125">
    <property type="expression patterns" value="Expressed in femorotibial joint and 36 other cell types or tissues"/>
</dbReference>
<dbReference type="GO" id="GO:0009986">
    <property type="term" value="C:cell surface"/>
    <property type="evidence" value="ECO:0007669"/>
    <property type="project" value="Ensembl"/>
</dbReference>
<dbReference type="GO" id="GO:0062023">
    <property type="term" value="C:collagen-containing extracellular matrix"/>
    <property type="evidence" value="ECO:0007005"/>
    <property type="project" value="BHF-UCL"/>
</dbReference>
<dbReference type="GO" id="GO:0005737">
    <property type="term" value="C:cytoplasm"/>
    <property type="evidence" value="ECO:0000314"/>
    <property type="project" value="MGI"/>
</dbReference>
<dbReference type="GO" id="GO:0005615">
    <property type="term" value="C:extracellular space"/>
    <property type="evidence" value="ECO:0007669"/>
    <property type="project" value="Ensembl"/>
</dbReference>
<dbReference type="GO" id="GO:0005794">
    <property type="term" value="C:Golgi apparatus"/>
    <property type="evidence" value="ECO:0007669"/>
    <property type="project" value="Ensembl"/>
</dbReference>
<dbReference type="GO" id="GO:0030141">
    <property type="term" value="C:secretory granule"/>
    <property type="evidence" value="ECO:0000266"/>
    <property type="project" value="MGI"/>
</dbReference>
<dbReference type="GO" id="GO:0017053">
    <property type="term" value="C:transcription repressor complex"/>
    <property type="evidence" value="ECO:0007669"/>
    <property type="project" value="Ensembl"/>
</dbReference>
<dbReference type="GO" id="GO:0019955">
    <property type="term" value="F:cytokine binding"/>
    <property type="evidence" value="ECO:0007669"/>
    <property type="project" value="Ensembl"/>
</dbReference>
<dbReference type="GO" id="GO:0008201">
    <property type="term" value="F:heparin binding"/>
    <property type="evidence" value="ECO:0000266"/>
    <property type="project" value="MGI"/>
</dbReference>
<dbReference type="GO" id="GO:0008233">
    <property type="term" value="F:peptidase activity"/>
    <property type="evidence" value="ECO:0000266"/>
    <property type="project" value="MGI"/>
</dbReference>
<dbReference type="GO" id="GO:0002020">
    <property type="term" value="F:protease binding"/>
    <property type="evidence" value="ECO:0007669"/>
    <property type="project" value="Ensembl"/>
</dbReference>
<dbReference type="GO" id="GO:0004252">
    <property type="term" value="F:serine-type endopeptidase activity"/>
    <property type="evidence" value="ECO:0000314"/>
    <property type="project" value="MGI"/>
</dbReference>
<dbReference type="GO" id="GO:0003714">
    <property type="term" value="F:transcription corepressor activity"/>
    <property type="evidence" value="ECO:0007669"/>
    <property type="project" value="Ensembl"/>
</dbReference>
<dbReference type="GO" id="GO:0002438">
    <property type="term" value="P:acute inflammatory response to antigenic stimulus"/>
    <property type="evidence" value="ECO:0000314"/>
    <property type="project" value="MGI"/>
</dbReference>
<dbReference type="GO" id="GO:0002812">
    <property type="term" value="P:biosynthetic process of antibacterial peptides active against Gram-negative bacteria"/>
    <property type="evidence" value="ECO:0007669"/>
    <property type="project" value="Ensembl"/>
</dbReference>
<dbReference type="GO" id="GO:0050832">
    <property type="term" value="P:defense response to fungus"/>
    <property type="evidence" value="ECO:0000315"/>
    <property type="project" value="MGI"/>
</dbReference>
<dbReference type="GO" id="GO:0050900">
    <property type="term" value="P:leukocyte migration"/>
    <property type="evidence" value="ECO:0000315"/>
    <property type="project" value="MGI"/>
</dbReference>
<dbReference type="GO" id="GO:0002523">
    <property type="term" value="P:leukocyte migration involved in inflammatory response"/>
    <property type="evidence" value="ECO:0007669"/>
    <property type="project" value="Ensembl"/>
</dbReference>
<dbReference type="GO" id="GO:0032682">
    <property type="term" value="P:negative regulation of chemokine production"/>
    <property type="evidence" value="ECO:0007669"/>
    <property type="project" value="Ensembl"/>
</dbReference>
<dbReference type="GO" id="GO:0032717">
    <property type="term" value="P:negative regulation of interleukin-8 production"/>
    <property type="evidence" value="ECO:0007669"/>
    <property type="project" value="Ensembl"/>
</dbReference>
<dbReference type="GO" id="GO:0000122">
    <property type="term" value="P:negative regulation of transcription by RNA polymerase II"/>
    <property type="evidence" value="ECO:0007669"/>
    <property type="project" value="Ensembl"/>
</dbReference>
<dbReference type="GO" id="GO:0070947">
    <property type="term" value="P:neutrophil-mediated killing of fungus"/>
    <property type="evidence" value="ECO:0000315"/>
    <property type="project" value="MGI"/>
</dbReference>
<dbReference type="GO" id="GO:0070945">
    <property type="term" value="P:neutrophil-mediated killing of gram-negative bacterium"/>
    <property type="evidence" value="ECO:0007669"/>
    <property type="project" value="Ensembl"/>
</dbReference>
<dbReference type="GO" id="GO:0006909">
    <property type="term" value="P:phagocytosis"/>
    <property type="evidence" value="ECO:0000315"/>
    <property type="project" value="MGI"/>
</dbReference>
<dbReference type="GO" id="GO:0050778">
    <property type="term" value="P:positive regulation of immune response"/>
    <property type="evidence" value="ECO:0000315"/>
    <property type="project" value="MGI"/>
</dbReference>
<dbReference type="GO" id="GO:0032757">
    <property type="term" value="P:positive regulation of interleukin-8 production"/>
    <property type="evidence" value="ECO:0007669"/>
    <property type="project" value="Ensembl"/>
</dbReference>
<dbReference type="GO" id="GO:1903238">
    <property type="term" value="P:positive regulation of leukocyte tethering or rolling"/>
    <property type="evidence" value="ECO:0007669"/>
    <property type="project" value="Ensembl"/>
</dbReference>
<dbReference type="GO" id="GO:0048661">
    <property type="term" value="P:positive regulation of smooth muscle cell proliferation"/>
    <property type="evidence" value="ECO:0007669"/>
    <property type="project" value="Ensembl"/>
</dbReference>
<dbReference type="GO" id="GO:0006508">
    <property type="term" value="P:proteolysis"/>
    <property type="evidence" value="ECO:0000266"/>
    <property type="project" value="MGI"/>
</dbReference>
<dbReference type="GO" id="GO:0032496">
    <property type="term" value="P:response to lipopolysaccharide"/>
    <property type="evidence" value="ECO:0000315"/>
    <property type="project" value="MGI"/>
</dbReference>
<dbReference type="GO" id="GO:0009411">
    <property type="term" value="P:response to UV"/>
    <property type="evidence" value="ECO:0007669"/>
    <property type="project" value="Ensembl"/>
</dbReference>
<dbReference type="GO" id="GO:0001878">
    <property type="term" value="P:response to yeast"/>
    <property type="evidence" value="ECO:0000315"/>
    <property type="project" value="MGI"/>
</dbReference>
<dbReference type="CDD" id="cd00190">
    <property type="entry name" value="Tryp_SPc"/>
    <property type="match status" value="1"/>
</dbReference>
<dbReference type="FunFam" id="2.40.10.10:FF:000052">
    <property type="entry name" value="Neutrophil elastase"/>
    <property type="match status" value="1"/>
</dbReference>
<dbReference type="Gene3D" id="2.40.10.10">
    <property type="entry name" value="Trypsin-like serine proteases"/>
    <property type="match status" value="2"/>
</dbReference>
<dbReference type="InterPro" id="IPR050850">
    <property type="entry name" value="Peptidase_S1_Elastase_sf"/>
</dbReference>
<dbReference type="InterPro" id="IPR009003">
    <property type="entry name" value="Peptidase_S1_PA"/>
</dbReference>
<dbReference type="InterPro" id="IPR043504">
    <property type="entry name" value="Peptidase_S1_PA_chymotrypsin"/>
</dbReference>
<dbReference type="InterPro" id="IPR001314">
    <property type="entry name" value="Peptidase_S1A"/>
</dbReference>
<dbReference type="InterPro" id="IPR001254">
    <property type="entry name" value="Trypsin_dom"/>
</dbReference>
<dbReference type="InterPro" id="IPR018114">
    <property type="entry name" value="TRYPSIN_HIS"/>
</dbReference>
<dbReference type="InterPro" id="IPR033116">
    <property type="entry name" value="TRYPSIN_SER"/>
</dbReference>
<dbReference type="PANTHER" id="PTHR24257">
    <property type="entry name" value="CHYMOTRYPSIN-LIKE ELASTASE FAMILY MEMBER"/>
    <property type="match status" value="1"/>
</dbReference>
<dbReference type="PANTHER" id="PTHR24257:SF16">
    <property type="entry name" value="NEUTROPHIL ELASTASE"/>
    <property type="match status" value="1"/>
</dbReference>
<dbReference type="Pfam" id="PF00089">
    <property type="entry name" value="Trypsin"/>
    <property type="match status" value="1"/>
</dbReference>
<dbReference type="PRINTS" id="PR00722">
    <property type="entry name" value="CHYMOTRYPSIN"/>
</dbReference>
<dbReference type="SMART" id="SM00020">
    <property type="entry name" value="Tryp_SPc"/>
    <property type="match status" value="1"/>
</dbReference>
<dbReference type="SUPFAM" id="SSF50494">
    <property type="entry name" value="Trypsin-like serine proteases"/>
    <property type="match status" value="1"/>
</dbReference>
<dbReference type="PROSITE" id="PS50240">
    <property type="entry name" value="TRYPSIN_DOM"/>
    <property type="match status" value="1"/>
</dbReference>
<dbReference type="PROSITE" id="PS00134">
    <property type="entry name" value="TRYPSIN_HIS"/>
    <property type="match status" value="1"/>
</dbReference>
<dbReference type="PROSITE" id="PS00135">
    <property type="entry name" value="TRYPSIN_SER"/>
    <property type="match status" value="1"/>
</dbReference>
<sequence>MALGRLSSRTLAAMLLALFLGGPALASEIVGGRPARPHAWPFMASLQRRGGHFCGATLIARNFVMSAAHCVNGLNFRSVQVVLGAHDLRRQERTRQTFSVQRIFENGFDPSQLLNDIVIIQLNGSATINANVQVAQLPAQGQGVGDRTPCLAMGWGRLGTNRPSPSVLQELNVTVVTNMCRRRVNVCTLVPRRQAGICFGDSGGPLVCNNLVQGIDSFIRGGCGSGLYPDAFAPVAEFADWINSIIRSHNDHLLTHPKDREGRTN</sequence>
<gene>
    <name type="primary">Elane</name>
    <name type="synonym">Ela2</name>
</gene>
<accession>Q3UP87</accession>
<accession>A6H698</accession>
<accession>Q61515</accession>
<protein>
    <recommendedName>
        <fullName>Neutrophil elastase</fullName>
        <ecNumber>3.4.21.37</ecNumber>
    </recommendedName>
    <alternativeName>
        <fullName>Elastase-2</fullName>
    </alternativeName>
    <alternativeName>
        <fullName>Leukocyte elastase</fullName>
    </alternativeName>
</protein>
<comment type="function">
    <text evidence="1 4 5">Serine protease that modifies the functions of natural killer cells, monocytes and granulocytes. Inhibits C5a-dependent neutrophil enzyme release and chemotaxis (By similarity). Promotes blood coagulation (PubMed:20676107). Through the activation of the platelet fibrinogen receptor integrin alpha-IIb/beta-3, potentiates platelet aggregation induced by a threshold concentration of cathepsin G (CTSG) (By similarity). Cleaves and thus inactivates tissue factor pathway inhibitor (TFPI) (By similarity). Capable of killing E.coli; probably digests outer membrane protein A (ompA) in E.coli (PubMed:10947984).</text>
</comment>
<comment type="catalytic activity">
    <reaction evidence="1">
        <text>Hydrolysis of proteins, including elastin. Preferential cleavage: Val-|-Xaa &gt; Ala-|-Xaa.</text>
        <dbReference type="EC" id="3.4.21.37"/>
    </reaction>
</comment>
<comment type="subunit">
    <text evidence="1">Interacts with NOTCH2NL.</text>
</comment>
<comment type="disruption phenotype">
    <text evidence="4 5">Knockout mice are more easily killed by wild-type E.coli, but the knockout has no visible killing effect on E.coli deleted for outer membrane protein A (ompA) (PubMed:10947984). Reduced fibrin formation in response to FeCl(3)-induced vessel injury (PubMed:20676107).</text>
</comment>
<comment type="similarity">
    <text evidence="3">Belongs to the peptidase S1 family. Elastase subfamily.</text>
</comment>
<reference key="1">
    <citation type="journal article" date="1994" name="Mol. Cell. Biol.">
        <title>PEBP2/CBF, the murine homolog of the human myeloid AML1 and PEBP2 beta/CBF beta proto-oncoproteins, regulates the murine myeloperoxidase and neutrophil elastase genes in immature myeloid cells.</title>
        <authorList>
            <person name="Nuchprayoon I."/>
            <person name="Meyers S."/>
            <person name="Scott L.M."/>
            <person name="Suzow J."/>
            <person name="Hiebert S."/>
            <person name="Friedman A.D."/>
        </authorList>
    </citation>
    <scope>NUCLEOTIDE SEQUENCE [GENOMIC DNA]</scope>
    <source>
        <strain>BALB/cJ</strain>
    </source>
</reference>
<reference key="2">
    <citation type="journal article" date="2005" name="Science">
        <title>The transcriptional landscape of the mammalian genome.</title>
        <authorList>
            <person name="Carninci P."/>
            <person name="Kasukawa T."/>
            <person name="Katayama S."/>
            <person name="Gough J."/>
            <person name="Frith M.C."/>
            <person name="Maeda N."/>
            <person name="Oyama R."/>
            <person name="Ravasi T."/>
            <person name="Lenhard B."/>
            <person name="Wells C."/>
            <person name="Kodzius R."/>
            <person name="Shimokawa K."/>
            <person name="Bajic V.B."/>
            <person name="Brenner S.E."/>
            <person name="Batalov S."/>
            <person name="Forrest A.R."/>
            <person name="Zavolan M."/>
            <person name="Davis M.J."/>
            <person name="Wilming L.G."/>
            <person name="Aidinis V."/>
            <person name="Allen J.E."/>
            <person name="Ambesi-Impiombato A."/>
            <person name="Apweiler R."/>
            <person name="Aturaliya R.N."/>
            <person name="Bailey T.L."/>
            <person name="Bansal M."/>
            <person name="Baxter L."/>
            <person name="Beisel K.W."/>
            <person name="Bersano T."/>
            <person name="Bono H."/>
            <person name="Chalk A.M."/>
            <person name="Chiu K.P."/>
            <person name="Choudhary V."/>
            <person name="Christoffels A."/>
            <person name="Clutterbuck D.R."/>
            <person name="Crowe M.L."/>
            <person name="Dalla E."/>
            <person name="Dalrymple B.P."/>
            <person name="de Bono B."/>
            <person name="Della Gatta G."/>
            <person name="di Bernardo D."/>
            <person name="Down T."/>
            <person name="Engstrom P."/>
            <person name="Fagiolini M."/>
            <person name="Faulkner G."/>
            <person name="Fletcher C.F."/>
            <person name="Fukushima T."/>
            <person name="Furuno M."/>
            <person name="Futaki S."/>
            <person name="Gariboldi M."/>
            <person name="Georgii-Hemming P."/>
            <person name="Gingeras T.R."/>
            <person name="Gojobori T."/>
            <person name="Green R.E."/>
            <person name="Gustincich S."/>
            <person name="Harbers M."/>
            <person name="Hayashi Y."/>
            <person name="Hensch T.K."/>
            <person name="Hirokawa N."/>
            <person name="Hill D."/>
            <person name="Huminiecki L."/>
            <person name="Iacono M."/>
            <person name="Ikeo K."/>
            <person name="Iwama A."/>
            <person name="Ishikawa T."/>
            <person name="Jakt M."/>
            <person name="Kanapin A."/>
            <person name="Katoh M."/>
            <person name="Kawasawa Y."/>
            <person name="Kelso J."/>
            <person name="Kitamura H."/>
            <person name="Kitano H."/>
            <person name="Kollias G."/>
            <person name="Krishnan S.P."/>
            <person name="Kruger A."/>
            <person name="Kummerfeld S.K."/>
            <person name="Kurochkin I.V."/>
            <person name="Lareau L.F."/>
            <person name="Lazarevic D."/>
            <person name="Lipovich L."/>
            <person name="Liu J."/>
            <person name="Liuni S."/>
            <person name="McWilliam S."/>
            <person name="Madan Babu M."/>
            <person name="Madera M."/>
            <person name="Marchionni L."/>
            <person name="Matsuda H."/>
            <person name="Matsuzawa S."/>
            <person name="Miki H."/>
            <person name="Mignone F."/>
            <person name="Miyake S."/>
            <person name="Morris K."/>
            <person name="Mottagui-Tabar S."/>
            <person name="Mulder N."/>
            <person name="Nakano N."/>
            <person name="Nakauchi H."/>
            <person name="Ng P."/>
            <person name="Nilsson R."/>
            <person name="Nishiguchi S."/>
            <person name="Nishikawa S."/>
            <person name="Nori F."/>
            <person name="Ohara O."/>
            <person name="Okazaki Y."/>
            <person name="Orlando V."/>
            <person name="Pang K.C."/>
            <person name="Pavan W.J."/>
            <person name="Pavesi G."/>
            <person name="Pesole G."/>
            <person name="Petrovsky N."/>
            <person name="Piazza S."/>
            <person name="Reed J."/>
            <person name="Reid J.F."/>
            <person name="Ring B.Z."/>
            <person name="Ringwald M."/>
            <person name="Rost B."/>
            <person name="Ruan Y."/>
            <person name="Salzberg S.L."/>
            <person name="Sandelin A."/>
            <person name="Schneider C."/>
            <person name="Schoenbach C."/>
            <person name="Sekiguchi K."/>
            <person name="Semple C.A."/>
            <person name="Seno S."/>
            <person name="Sessa L."/>
            <person name="Sheng Y."/>
            <person name="Shibata Y."/>
            <person name="Shimada H."/>
            <person name="Shimada K."/>
            <person name="Silva D."/>
            <person name="Sinclair B."/>
            <person name="Sperling S."/>
            <person name="Stupka E."/>
            <person name="Sugiura K."/>
            <person name="Sultana R."/>
            <person name="Takenaka Y."/>
            <person name="Taki K."/>
            <person name="Tammoja K."/>
            <person name="Tan S.L."/>
            <person name="Tang S."/>
            <person name="Taylor M.S."/>
            <person name="Tegner J."/>
            <person name="Teichmann S.A."/>
            <person name="Ueda H.R."/>
            <person name="van Nimwegen E."/>
            <person name="Verardo R."/>
            <person name="Wei C.L."/>
            <person name="Yagi K."/>
            <person name="Yamanishi H."/>
            <person name="Zabarovsky E."/>
            <person name="Zhu S."/>
            <person name="Zimmer A."/>
            <person name="Hide W."/>
            <person name="Bult C."/>
            <person name="Grimmond S.M."/>
            <person name="Teasdale R.D."/>
            <person name="Liu E.T."/>
            <person name="Brusic V."/>
            <person name="Quackenbush J."/>
            <person name="Wahlestedt C."/>
            <person name="Mattick J.S."/>
            <person name="Hume D.A."/>
            <person name="Kai C."/>
            <person name="Sasaki D."/>
            <person name="Tomaru Y."/>
            <person name="Fukuda S."/>
            <person name="Kanamori-Katayama M."/>
            <person name="Suzuki M."/>
            <person name="Aoki J."/>
            <person name="Arakawa T."/>
            <person name="Iida J."/>
            <person name="Imamura K."/>
            <person name="Itoh M."/>
            <person name="Kato T."/>
            <person name="Kawaji H."/>
            <person name="Kawagashira N."/>
            <person name="Kawashima T."/>
            <person name="Kojima M."/>
            <person name="Kondo S."/>
            <person name="Konno H."/>
            <person name="Nakano K."/>
            <person name="Ninomiya N."/>
            <person name="Nishio T."/>
            <person name="Okada M."/>
            <person name="Plessy C."/>
            <person name="Shibata K."/>
            <person name="Shiraki T."/>
            <person name="Suzuki S."/>
            <person name="Tagami M."/>
            <person name="Waki K."/>
            <person name="Watahiki A."/>
            <person name="Okamura-Oho Y."/>
            <person name="Suzuki H."/>
            <person name="Kawai J."/>
            <person name="Hayashizaki Y."/>
        </authorList>
    </citation>
    <scope>NUCLEOTIDE SEQUENCE [LARGE SCALE MRNA]</scope>
    <source>
        <strain>C57BL/6J</strain>
        <tissue>Spleen</tissue>
    </source>
</reference>
<reference key="3">
    <citation type="journal article" date="2004" name="Genome Res.">
        <title>The status, quality, and expansion of the NIH full-length cDNA project: the Mammalian Gene Collection (MGC).</title>
        <authorList>
            <consortium name="The MGC Project Team"/>
        </authorList>
    </citation>
    <scope>NUCLEOTIDE SEQUENCE [LARGE SCALE MRNA]</scope>
    <source>
        <tissue>Brain</tissue>
    </source>
</reference>
<reference key="4">
    <citation type="journal article" date="2000" name="Science">
        <title>Degradation of outer membrane protein A in Escherichia coli killing by neutrophil elastase.</title>
        <authorList>
            <person name="Belaaouaj A."/>
            <person name="Kim K.S."/>
            <person name="Shapiro S.D."/>
        </authorList>
    </citation>
    <scope>FUNCTION IN DEFENSE AGAINST BACTERIA</scope>
    <scope>DISRUPTION PHENOTYPE</scope>
</reference>
<reference key="5">
    <citation type="journal article" date="2010" name="Nat. Med.">
        <title>Reciprocal coupling of coagulation and innate immunity via neutrophil serine proteases.</title>
        <authorList>
            <person name="Massberg S."/>
            <person name="Grahl L."/>
            <person name="von Bruehl M.L."/>
            <person name="Manukyan D."/>
            <person name="Pfeiler S."/>
            <person name="Goosmann C."/>
            <person name="Brinkmann V."/>
            <person name="Lorenz M."/>
            <person name="Bidzhekov K."/>
            <person name="Khandagale A.B."/>
            <person name="Konrad I."/>
            <person name="Kennerknecht E."/>
            <person name="Reges K."/>
            <person name="Holdenrieder S."/>
            <person name="Braun S."/>
            <person name="Reinhardt C."/>
            <person name="Spannagl M."/>
            <person name="Preissner K.T."/>
            <person name="Engelmann B."/>
        </authorList>
    </citation>
    <scope>FUNCTION</scope>
    <scope>DISRUPTION PHENOTYPE</scope>
</reference>
<keyword id="KW-1015">Disulfide bond</keyword>
<keyword id="KW-0325">Glycoprotein</keyword>
<keyword id="KW-0378">Hydrolase</keyword>
<keyword id="KW-0645">Protease</keyword>
<keyword id="KW-1185">Reference proteome</keyword>
<keyword id="KW-0720">Serine protease</keyword>
<keyword id="KW-0732">Signal</keyword>
<evidence type="ECO:0000250" key="1">
    <source>
        <dbReference type="UniProtKB" id="P08246"/>
    </source>
</evidence>
<evidence type="ECO:0000255" key="2"/>
<evidence type="ECO:0000255" key="3">
    <source>
        <dbReference type="PROSITE-ProRule" id="PRU00274"/>
    </source>
</evidence>
<evidence type="ECO:0000269" key="4">
    <source>
    </source>
</evidence>
<evidence type="ECO:0000269" key="5">
    <source>
    </source>
</evidence>
<evidence type="ECO:0000305" key="6"/>
<feature type="signal peptide" evidence="2">
    <location>
        <begin position="1"/>
        <end position="26"/>
    </location>
</feature>
<feature type="chain" id="PRO_0000228686" description="Neutrophil elastase">
    <location>
        <begin position="27"/>
        <end position="265"/>
    </location>
</feature>
<feature type="domain" description="Peptidase S1" evidence="3">
    <location>
        <begin position="29"/>
        <end position="247"/>
    </location>
</feature>
<feature type="active site" description="Charge relay system" evidence="1">
    <location>
        <position position="69"/>
    </location>
</feature>
<feature type="active site" description="Charge relay system" evidence="1">
    <location>
        <position position="116"/>
    </location>
</feature>
<feature type="active site" description="Charge relay system" evidence="1">
    <location>
        <position position="202"/>
    </location>
</feature>
<feature type="glycosylation site" description="N-linked (GlcNAc...) asparagine" evidence="2">
    <location>
        <position position="123"/>
    </location>
</feature>
<feature type="glycosylation site" description="N-linked (GlcNAc...) asparagine" evidence="2">
    <location>
        <position position="172"/>
    </location>
</feature>
<feature type="disulfide bond" evidence="3">
    <location>
        <begin position="54"/>
        <end position="70"/>
    </location>
</feature>
<feature type="disulfide bond" evidence="3">
    <location>
        <begin position="150"/>
        <end position="208"/>
    </location>
</feature>
<feature type="disulfide bond" evidence="3">
    <location>
        <begin position="180"/>
        <end position="187"/>
    </location>
</feature>
<feature type="disulfide bond" evidence="3">
    <location>
        <begin position="198"/>
        <end position="223"/>
    </location>
</feature>
<feature type="sequence conflict" description="In Ref. 1; AAB60670." evidence="6" ref="1">
    <original>A</original>
    <variation>P</variation>
    <location>
        <position position="26"/>
    </location>
</feature>
<feature type="sequence conflict" description="In Ref. 1; AAB60670." evidence="6" ref="1">
    <original>A</original>
    <variation>V</variation>
    <location>
        <position position="68"/>
    </location>
</feature>
<feature type="sequence conflict" description="In Ref. 1; AAB60670." evidence="6" ref="1">
    <original>R</original>
    <variation>G</variation>
    <location>
        <position position="102"/>
    </location>
</feature>
<feature type="sequence conflict" description="In Ref. 1; AAB60670." evidence="6" ref="1">
    <original>R</original>
    <variation>P</variation>
    <location>
        <position position="181"/>
    </location>
</feature>
<feature type="sequence conflict" description="In Ref. 1; AAB60670." evidence="6" ref="1">
    <original>A</original>
    <variation>G</variation>
    <location>
        <position position="236"/>
    </location>
</feature>
<feature type="sequence conflict" description="In Ref. 1; AAB60670." evidence="6" ref="1">
    <original>A</original>
    <variation>V</variation>
    <location>
        <position position="239"/>
    </location>
</feature>
<feature type="sequence conflict" description="In Ref. 1; AAB60670." evidence="6" ref="1">
    <original>S</original>
    <variation>R</variation>
    <location>
        <position position="248"/>
    </location>
</feature>
<feature type="sequence conflict" description="In Ref. 1; AAB60670." evidence="6" ref="1">
    <original>E</original>
    <variation>R</variation>
    <location>
        <position position="261"/>
    </location>
</feature>
<organism>
    <name type="scientific">Mus musculus</name>
    <name type="common">Mouse</name>
    <dbReference type="NCBI Taxonomy" id="10090"/>
    <lineage>
        <taxon>Eukaryota</taxon>
        <taxon>Metazoa</taxon>
        <taxon>Chordata</taxon>
        <taxon>Craniata</taxon>
        <taxon>Vertebrata</taxon>
        <taxon>Euteleostomi</taxon>
        <taxon>Mammalia</taxon>
        <taxon>Eutheria</taxon>
        <taxon>Euarchontoglires</taxon>
        <taxon>Glires</taxon>
        <taxon>Rodentia</taxon>
        <taxon>Myomorpha</taxon>
        <taxon>Muroidea</taxon>
        <taxon>Muridae</taxon>
        <taxon>Murinae</taxon>
        <taxon>Mus</taxon>
        <taxon>Mus</taxon>
    </lineage>
</organism>
<proteinExistence type="evidence at protein level"/>
<name>ELNE_MOUSE</name>